<keyword id="KW-0472">Membrane</keyword>
<keyword id="KW-1185">Reference proteome</keyword>
<keyword id="KW-0812">Transmembrane</keyword>
<keyword id="KW-1133">Transmembrane helix</keyword>
<feature type="chain" id="PRO_0000298996" description="TM2 domain-containing protein ZK858.5">
    <location>
        <begin position="1"/>
        <end position="409"/>
    </location>
</feature>
<feature type="transmembrane region" description="Helical" evidence="1">
    <location>
        <begin position="10"/>
        <end position="30"/>
    </location>
</feature>
<feature type="transmembrane region" description="Helical" evidence="1">
    <location>
        <begin position="37"/>
        <end position="57"/>
    </location>
</feature>
<feature type="transmembrane region" description="Helical" evidence="1">
    <location>
        <begin position="104"/>
        <end position="124"/>
    </location>
</feature>
<feature type="transmembrane region" description="Helical" evidence="1">
    <location>
        <begin position="127"/>
        <end position="147"/>
    </location>
</feature>
<feature type="transmembrane region" description="Helical" evidence="1">
    <location>
        <begin position="168"/>
        <end position="190"/>
    </location>
</feature>
<feature type="transmembrane region" description="Helical" evidence="1">
    <location>
        <begin position="209"/>
        <end position="229"/>
    </location>
</feature>
<feature type="domain" description="TM2" evidence="1">
    <location>
        <begin position="8"/>
        <end position="55"/>
    </location>
</feature>
<protein>
    <recommendedName>
        <fullName>TM2 domain-containing protein ZK858.5</fullName>
    </recommendedName>
</protein>
<accession>Q94421</accession>
<dbReference type="EMBL" id="Z79759">
    <property type="protein sequence ID" value="CAB02140.2"/>
    <property type="molecule type" value="Genomic_DNA"/>
</dbReference>
<dbReference type="PIR" id="T28057">
    <property type="entry name" value="T28057"/>
</dbReference>
<dbReference type="RefSeq" id="NP_492450.2">
    <property type="nucleotide sequence ID" value="NM_060049.4"/>
</dbReference>
<dbReference type="FunCoup" id="Q94421">
    <property type="interactions" value="18"/>
</dbReference>
<dbReference type="STRING" id="6239.ZK858.5.1"/>
<dbReference type="PaxDb" id="6239-ZK858.5"/>
<dbReference type="PeptideAtlas" id="Q94421"/>
<dbReference type="EnsemblMetazoa" id="ZK858.5.1">
    <property type="protein sequence ID" value="ZK858.5.1"/>
    <property type="gene ID" value="WBGene00014118"/>
</dbReference>
<dbReference type="GeneID" id="172738"/>
<dbReference type="KEGG" id="cel:CELE_ZK858.5"/>
<dbReference type="UCSC" id="ZK858.5">
    <property type="organism name" value="c. elegans"/>
</dbReference>
<dbReference type="AGR" id="WB:WBGene00014118"/>
<dbReference type="CTD" id="172738"/>
<dbReference type="WormBase" id="ZK858.5">
    <property type="protein sequence ID" value="CE34235"/>
    <property type="gene ID" value="WBGene00014118"/>
</dbReference>
<dbReference type="eggNOG" id="ENOG502SRYM">
    <property type="taxonomic scope" value="Eukaryota"/>
</dbReference>
<dbReference type="HOGENOM" id="CLU_041057_0_0_1"/>
<dbReference type="InParanoid" id="Q94421"/>
<dbReference type="OMA" id="WRNYLIH"/>
<dbReference type="OrthoDB" id="10262359at2759"/>
<dbReference type="PRO" id="PR:Q94421"/>
<dbReference type="Proteomes" id="UP000001940">
    <property type="component" value="Chromosome I"/>
</dbReference>
<dbReference type="Bgee" id="WBGene00014118">
    <property type="expression patterns" value="Expressed in germ line (C elegans) and 4 other cell types or tissues"/>
</dbReference>
<dbReference type="GO" id="GO:0016020">
    <property type="term" value="C:membrane"/>
    <property type="evidence" value="ECO:0000318"/>
    <property type="project" value="GO_Central"/>
</dbReference>
<dbReference type="InterPro" id="IPR007829">
    <property type="entry name" value="TM2"/>
</dbReference>
<dbReference type="PANTHER" id="PTHR44733">
    <property type="entry name" value="DNAJ HOMOLOG SUBFAMILY C MEMBER 22"/>
    <property type="match status" value="1"/>
</dbReference>
<dbReference type="PANTHER" id="PTHR44733:SF1">
    <property type="entry name" value="DNAJ HOMOLOG SUBFAMILY C MEMBER 22"/>
    <property type="match status" value="1"/>
</dbReference>
<dbReference type="Pfam" id="PF05154">
    <property type="entry name" value="TM2"/>
    <property type="match status" value="1"/>
</dbReference>
<sequence length="409" mass="47180">MNNEETEVKPWIVRIILIVGGLFGAHRLYLKQVPEAFVFFSTLGVLLIGWLYDSFMFKYEVNEYNQLINQSENNKEKEKWKNGKMQASQSKFVDFSFTRFLYSVLYGSYIGLATWLACTVTFGWTDINLIPFICVVALGITAGIYIIGQCGGQSRELSYIWMASFSSMFIMVRLAQTTVFRAIFLTAIVSTVIGNRSARLKKRRHTWKHFLFWSSLFLMLVCVILLGCSRKVADKQVTATRPGTFRETISVGSLIRDRIFDAKKVHSFFEGNPIIEYHSKSDIKNKNGEKTLKNSSFWYQVWSGELFDELTGAAHLTKIDWIELTTTFIVDVLRSEARVIDGSSTIEPFKWALWRNYLIHRFSLDPLISDDRLRTECKKWQTEEKSKKGNVDRDYNILAAKQGCSTFLL</sequence>
<organism>
    <name type="scientific">Caenorhabditis elegans</name>
    <dbReference type="NCBI Taxonomy" id="6239"/>
    <lineage>
        <taxon>Eukaryota</taxon>
        <taxon>Metazoa</taxon>
        <taxon>Ecdysozoa</taxon>
        <taxon>Nematoda</taxon>
        <taxon>Chromadorea</taxon>
        <taxon>Rhabditida</taxon>
        <taxon>Rhabditina</taxon>
        <taxon>Rhabditomorpha</taxon>
        <taxon>Rhabditoidea</taxon>
        <taxon>Rhabditidae</taxon>
        <taxon>Peloderinae</taxon>
        <taxon>Caenorhabditis</taxon>
    </lineage>
</organism>
<name>TM2D4_CAEEL</name>
<evidence type="ECO:0000255" key="1"/>
<evidence type="ECO:0000305" key="2"/>
<proteinExistence type="inferred from homology"/>
<reference key="1">
    <citation type="journal article" date="1998" name="Science">
        <title>Genome sequence of the nematode C. elegans: a platform for investigating biology.</title>
        <authorList>
            <consortium name="The C. elegans sequencing consortium"/>
        </authorList>
    </citation>
    <scope>NUCLEOTIDE SEQUENCE [LARGE SCALE GENOMIC DNA]</scope>
    <source>
        <strain>Bristol N2</strain>
    </source>
</reference>
<comment type="subcellular location">
    <subcellularLocation>
        <location evidence="2">Membrane</location>
        <topology evidence="2">Multi-pass membrane protein</topology>
    </subcellularLocation>
</comment>
<comment type="similarity">
    <text evidence="2">Belongs to the TM2 family.</text>
</comment>
<gene>
    <name type="ORF">ZK858.5</name>
</gene>